<dbReference type="EMBL" id="CP000252">
    <property type="protein sequence ID" value="ABC76510.1"/>
    <property type="molecule type" value="Genomic_DNA"/>
</dbReference>
<dbReference type="RefSeq" id="WP_011416544.1">
    <property type="nucleotide sequence ID" value="NC_007759.1"/>
</dbReference>
<dbReference type="SMR" id="Q2LQZ6"/>
<dbReference type="FunCoup" id="Q2LQZ6">
    <property type="interactions" value="374"/>
</dbReference>
<dbReference type="STRING" id="56780.SYN_00545"/>
<dbReference type="KEGG" id="sat:SYN_00545"/>
<dbReference type="eggNOG" id="COG0224">
    <property type="taxonomic scope" value="Bacteria"/>
</dbReference>
<dbReference type="HOGENOM" id="CLU_050669_0_1_7"/>
<dbReference type="InParanoid" id="Q2LQZ6"/>
<dbReference type="OrthoDB" id="9812769at2"/>
<dbReference type="Proteomes" id="UP000001933">
    <property type="component" value="Chromosome"/>
</dbReference>
<dbReference type="GO" id="GO:0005886">
    <property type="term" value="C:plasma membrane"/>
    <property type="evidence" value="ECO:0007669"/>
    <property type="project" value="UniProtKB-SubCell"/>
</dbReference>
<dbReference type="GO" id="GO:0045259">
    <property type="term" value="C:proton-transporting ATP synthase complex"/>
    <property type="evidence" value="ECO:0007669"/>
    <property type="project" value="UniProtKB-KW"/>
</dbReference>
<dbReference type="GO" id="GO:0005524">
    <property type="term" value="F:ATP binding"/>
    <property type="evidence" value="ECO:0007669"/>
    <property type="project" value="UniProtKB-UniRule"/>
</dbReference>
<dbReference type="GO" id="GO:0046933">
    <property type="term" value="F:proton-transporting ATP synthase activity, rotational mechanism"/>
    <property type="evidence" value="ECO:0007669"/>
    <property type="project" value="UniProtKB-UniRule"/>
</dbReference>
<dbReference type="GO" id="GO:0042777">
    <property type="term" value="P:proton motive force-driven plasma membrane ATP synthesis"/>
    <property type="evidence" value="ECO:0007669"/>
    <property type="project" value="UniProtKB-UniRule"/>
</dbReference>
<dbReference type="CDD" id="cd12151">
    <property type="entry name" value="F1-ATPase_gamma"/>
    <property type="match status" value="1"/>
</dbReference>
<dbReference type="Gene3D" id="3.40.1380.10">
    <property type="match status" value="1"/>
</dbReference>
<dbReference type="Gene3D" id="1.10.287.80">
    <property type="entry name" value="ATP synthase, gamma subunit, helix hairpin domain"/>
    <property type="match status" value="1"/>
</dbReference>
<dbReference type="HAMAP" id="MF_00815">
    <property type="entry name" value="ATP_synth_gamma_bact"/>
    <property type="match status" value="1"/>
</dbReference>
<dbReference type="InterPro" id="IPR035968">
    <property type="entry name" value="ATP_synth_F1_ATPase_gsu"/>
</dbReference>
<dbReference type="InterPro" id="IPR000131">
    <property type="entry name" value="ATP_synth_F1_gsu"/>
</dbReference>
<dbReference type="NCBIfam" id="TIGR01146">
    <property type="entry name" value="ATPsyn_F1gamma"/>
    <property type="match status" value="1"/>
</dbReference>
<dbReference type="PANTHER" id="PTHR11693">
    <property type="entry name" value="ATP SYNTHASE GAMMA CHAIN"/>
    <property type="match status" value="1"/>
</dbReference>
<dbReference type="PANTHER" id="PTHR11693:SF22">
    <property type="entry name" value="ATP SYNTHASE SUBUNIT GAMMA, MITOCHONDRIAL"/>
    <property type="match status" value="1"/>
</dbReference>
<dbReference type="Pfam" id="PF00231">
    <property type="entry name" value="ATP-synt"/>
    <property type="match status" value="1"/>
</dbReference>
<dbReference type="PRINTS" id="PR00126">
    <property type="entry name" value="ATPASEGAMMA"/>
</dbReference>
<dbReference type="SUPFAM" id="SSF52943">
    <property type="entry name" value="ATP synthase (F1-ATPase), gamma subunit"/>
    <property type="match status" value="1"/>
</dbReference>
<comment type="function">
    <text evidence="1">Produces ATP from ADP in the presence of a proton gradient across the membrane. The gamma chain is believed to be important in regulating ATPase activity and the flow of protons through the CF(0) complex.</text>
</comment>
<comment type="subunit">
    <text evidence="1">F-type ATPases have 2 components, CF(1) - the catalytic core - and CF(0) - the membrane proton channel. CF(1) has five subunits: alpha(3), beta(3), gamma(1), delta(1), epsilon(1). CF(0) has three main subunits: a, b and c.</text>
</comment>
<comment type="subcellular location">
    <subcellularLocation>
        <location evidence="1">Cell inner membrane</location>
        <topology evidence="1">Peripheral membrane protein</topology>
    </subcellularLocation>
</comment>
<comment type="similarity">
    <text evidence="1">Belongs to the ATPase gamma chain family.</text>
</comment>
<protein>
    <recommendedName>
        <fullName evidence="1">ATP synthase gamma chain</fullName>
    </recommendedName>
    <alternativeName>
        <fullName evidence="1">ATP synthase F1 sector gamma subunit</fullName>
    </alternativeName>
    <alternativeName>
        <fullName evidence="1">F-ATPase gamma subunit</fullName>
    </alternativeName>
</protein>
<sequence length="291" mass="32752">MAALKDIKRKVAAVEKTKQITRAMNMVAASKFRTSQTRMESFRPYAMKFMEVLSSLAVRVSPDAHPLLAAREAKRIRVVSMSSDRGLCGGFNSSLIKSTERFVREKIAEGLEVDLTPIGRKVREYFKRKYALVSDRADVMSKFDMTLAVEIAEDVIDPFVNEEYDELYLIYNEFINVSMQRPAVVRLLPLPSVGQDAEIEAEKRIDYNYEPSDEELIGKLLPMYIHVLIFRALLETSAGENGARMAAMDNATRNCDEMISTLTLQYNKVRQSAITAELMDIVGGTEALAKG</sequence>
<name>ATPG_SYNAS</name>
<feature type="chain" id="PRO_1000053359" description="ATP synthase gamma chain">
    <location>
        <begin position="1"/>
        <end position="291"/>
    </location>
</feature>
<accession>Q2LQZ6</accession>
<evidence type="ECO:0000255" key="1">
    <source>
        <dbReference type="HAMAP-Rule" id="MF_00815"/>
    </source>
</evidence>
<organism>
    <name type="scientific">Syntrophus aciditrophicus (strain SB)</name>
    <dbReference type="NCBI Taxonomy" id="56780"/>
    <lineage>
        <taxon>Bacteria</taxon>
        <taxon>Pseudomonadati</taxon>
        <taxon>Thermodesulfobacteriota</taxon>
        <taxon>Syntrophia</taxon>
        <taxon>Syntrophales</taxon>
        <taxon>Syntrophaceae</taxon>
        <taxon>Syntrophus</taxon>
    </lineage>
</organism>
<proteinExistence type="inferred from homology"/>
<gene>
    <name evidence="1" type="primary">atpG</name>
    <name type="ordered locus">SYNAS_06310</name>
    <name type="ORF">SYN_00545</name>
</gene>
<reference key="1">
    <citation type="journal article" date="2007" name="Proc. Natl. Acad. Sci. U.S.A.">
        <title>The genome of Syntrophus aciditrophicus: life at the thermodynamic limit of microbial growth.</title>
        <authorList>
            <person name="McInerney M.J."/>
            <person name="Rohlin L."/>
            <person name="Mouttaki H."/>
            <person name="Kim U."/>
            <person name="Krupp R.S."/>
            <person name="Rios-Hernandez L."/>
            <person name="Sieber J."/>
            <person name="Struchtemeyer C.G."/>
            <person name="Bhattacharyya A."/>
            <person name="Campbell J.W."/>
            <person name="Gunsalus R.P."/>
        </authorList>
    </citation>
    <scope>NUCLEOTIDE SEQUENCE [LARGE SCALE GENOMIC DNA]</scope>
    <source>
        <strain>SB</strain>
    </source>
</reference>
<keyword id="KW-0066">ATP synthesis</keyword>
<keyword id="KW-0997">Cell inner membrane</keyword>
<keyword id="KW-1003">Cell membrane</keyword>
<keyword id="KW-0139">CF(1)</keyword>
<keyword id="KW-0375">Hydrogen ion transport</keyword>
<keyword id="KW-0406">Ion transport</keyword>
<keyword id="KW-0472">Membrane</keyword>
<keyword id="KW-1185">Reference proteome</keyword>
<keyword id="KW-0813">Transport</keyword>